<protein>
    <recommendedName>
        <fullName>Transcriptional regulator MraZ</fullName>
    </recommendedName>
</protein>
<proteinExistence type="inferred from homology"/>
<comment type="function">
    <text evidence="1">Negatively regulates its own expression and that of the subsequent genes in the proximal part of the division and cell wall (dcw) gene cluster. Acts by binding directly to DNA. May also regulate the expression of genes outside the dcw cluster.</text>
</comment>
<comment type="subunit">
    <text evidence="1">Forms oligomers.</text>
</comment>
<comment type="subcellular location">
    <subcellularLocation>
        <location evidence="1">Cytoplasm</location>
        <location evidence="1">Nucleoid</location>
    </subcellularLocation>
</comment>
<comment type="similarity">
    <text evidence="1">Belongs to the MraZ family.</text>
</comment>
<name>MRAZ_CITK8</name>
<reference key="1">
    <citation type="submission" date="2007-08" db="EMBL/GenBank/DDBJ databases">
        <authorList>
            <consortium name="The Citrobacter koseri Genome Sequencing Project"/>
            <person name="McClelland M."/>
            <person name="Sanderson E.K."/>
            <person name="Porwollik S."/>
            <person name="Spieth J."/>
            <person name="Clifton W.S."/>
            <person name="Latreille P."/>
            <person name="Courtney L."/>
            <person name="Wang C."/>
            <person name="Pepin K."/>
            <person name="Bhonagiri V."/>
            <person name="Nash W."/>
            <person name="Johnson M."/>
            <person name="Thiruvilangam P."/>
            <person name="Wilson R."/>
        </authorList>
    </citation>
    <scope>NUCLEOTIDE SEQUENCE [LARGE SCALE GENOMIC DNA]</scope>
    <source>
        <strain>ATCC BAA-895 / CDC 4225-83 / SGSC4696</strain>
    </source>
</reference>
<evidence type="ECO:0000255" key="1">
    <source>
        <dbReference type="HAMAP-Rule" id="MF_01008"/>
    </source>
</evidence>
<evidence type="ECO:0000255" key="2">
    <source>
        <dbReference type="PROSITE-ProRule" id="PRU01076"/>
    </source>
</evidence>
<accession>A8ALL5</accession>
<gene>
    <name evidence="1" type="primary">mraZ</name>
    <name type="ordered locus">CKO_03295</name>
</gene>
<keyword id="KW-0963">Cytoplasm</keyword>
<keyword id="KW-0238">DNA-binding</keyword>
<keyword id="KW-1185">Reference proteome</keyword>
<keyword id="KW-0677">Repeat</keyword>
<keyword id="KW-0678">Repressor</keyword>
<keyword id="KW-0804">Transcription</keyword>
<keyword id="KW-0805">Transcription regulation</keyword>
<feature type="chain" id="PRO_1000062863" description="Transcriptional regulator MraZ">
    <location>
        <begin position="1"/>
        <end position="152"/>
    </location>
</feature>
<feature type="domain" description="SpoVT-AbrB 1" evidence="2">
    <location>
        <begin position="5"/>
        <end position="52"/>
    </location>
</feature>
<feature type="domain" description="SpoVT-AbrB 2" evidence="2">
    <location>
        <begin position="81"/>
        <end position="124"/>
    </location>
</feature>
<dbReference type="EMBL" id="CP000822">
    <property type="protein sequence ID" value="ABV14379.1"/>
    <property type="molecule type" value="Genomic_DNA"/>
</dbReference>
<dbReference type="RefSeq" id="WP_012134081.1">
    <property type="nucleotide sequence ID" value="NC_009792.1"/>
</dbReference>
<dbReference type="SMR" id="A8ALL5"/>
<dbReference type="STRING" id="290338.CKO_03295"/>
<dbReference type="GeneID" id="45137067"/>
<dbReference type="KEGG" id="cko:CKO_03295"/>
<dbReference type="HOGENOM" id="CLU_107907_2_0_6"/>
<dbReference type="OrthoDB" id="9807753at2"/>
<dbReference type="Proteomes" id="UP000008148">
    <property type="component" value="Chromosome"/>
</dbReference>
<dbReference type="GO" id="GO:0005737">
    <property type="term" value="C:cytoplasm"/>
    <property type="evidence" value="ECO:0007669"/>
    <property type="project" value="UniProtKB-UniRule"/>
</dbReference>
<dbReference type="GO" id="GO:0009295">
    <property type="term" value="C:nucleoid"/>
    <property type="evidence" value="ECO:0007669"/>
    <property type="project" value="UniProtKB-SubCell"/>
</dbReference>
<dbReference type="GO" id="GO:0003700">
    <property type="term" value="F:DNA-binding transcription factor activity"/>
    <property type="evidence" value="ECO:0007669"/>
    <property type="project" value="UniProtKB-UniRule"/>
</dbReference>
<dbReference type="GO" id="GO:0000976">
    <property type="term" value="F:transcription cis-regulatory region binding"/>
    <property type="evidence" value="ECO:0007669"/>
    <property type="project" value="TreeGrafter"/>
</dbReference>
<dbReference type="GO" id="GO:2000143">
    <property type="term" value="P:negative regulation of DNA-templated transcription initiation"/>
    <property type="evidence" value="ECO:0007669"/>
    <property type="project" value="TreeGrafter"/>
</dbReference>
<dbReference type="CDD" id="cd16321">
    <property type="entry name" value="MraZ_C"/>
    <property type="match status" value="1"/>
</dbReference>
<dbReference type="CDD" id="cd16320">
    <property type="entry name" value="MraZ_N"/>
    <property type="match status" value="1"/>
</dbReference>
<dbReference type="FunFam" id="3.40.1550.20:FF:000001">
    <property type="entry name" value="Transcriptional regulator MraZ"/>
    <property type="match status" value="1"/>
</dbReference>
<dbReference type="Gene3D" id="3.40.1550.20">
    <property type="entry name" value="Transcriptional regulator MraZ domain"/>
    <property type="match status" value="1"/>
</dbReference>
<dbReference type="HAMAP" id="MF_01008">
    <property type="entry name" value="MraZ"/>
    <property type="match status" value="1"/>
</dbReference>
<dbReference type="InterPro" id="IPR003444">
    <property type="entry name" value="MraZ"/>
</dbReference>
<dbReference type="InterPro" id="IPR035644">
    <property type="entry name" value="MraZ_C"/>
</dbReference>
<dbReference type="InterPro" id="IPR020603">
    <property type="entry name" value="MraZ_dom"/>
</dbReference>
<dbReference type="InterPro" id="IPR035642">
    <property type="entry name" value="MraZ_N"/>
</dbReference>
<dbReference type="InterPro" id="IPR038619">
    <property type="entry name" value="MraZ_sf"/>
</dbReference>
<dbReference type="InterPro" id="IPR007159">
    <property type="entry name" value="SpoVT-AbrB_dom"/>
</dbReference>
<dbReference type="InterPro" id="IPR037914">
    <property type="entry name" value="SpoVT-AbrB_sf"/>
</dbReference>
<dbReference type="NCBIfam" id="TIGR00242">
    <property type="entry name" value="division/cell wall cluster transcriptional repressor MraZ"/>
    <property type="match status" value="1"/>
</dbReference>
<dbReference type="PANTHER" id="PTHR34701">
    <property type="entry name" value="TRANSCRIPTIONAL REGULATOR MRAZ"/>
    <property type="match status" value="1"/>
</dbReference>
<dbReference type="PANTHER" id="PTHR34701:SF1">
    <property type="entry name" value="TRANSCRIPTIONAL REGULATOR MRAZ"/>
    <property type="match status" value="1"/>
</dbReference>
<dbReference type="Pfam" id="PF02381">
    <property type="entry name" value="MraZ"/>
    <property type="match status" value="2"/>
</dbReference>
<dbReference type="SUPFAM" id="SSF89447">
    <property type="entry name" value="AbrB/MazE/MraZ-like"/>
    <property type="match status" value="1"/>
</dbReference>
<dbReference type="PROSITE" id="PS51740">
    <property type="entry name" value="SPOVT_ABRB"/>
    <property type="match status" value="2"/>
</dbReference>
<sequence length="152" mass="17506">MFRGATLVNLDSKGRLSVPTRYRDQLIENATGQMVCTIDIHHPCLLLYPLPEWEIIEQKLSRLSSMNPVERRVQRLLLGHASECQMDSAGRLLIAPILRQHAGLTKEVMLVGQFNKFELWDETTWYQQVKEDIDAEQSVTETLSERLQDLSL</sequence>
<organism>
    <name type="scientific">Citrobacter koseri (strain ATCC BAA-895 / CDC 4225-83 / SGSC4696)</name>
    <dbReference type="NCBI Taxonomy" id="290338"/>
    <lineage>
        <taxon>Bacteria</taxon>
        <taxon>Pseudomonadati</taxon>
        <taxon>Pseudomonadota</taxon>
        <taxon>Gammaproteobacteria</taxon>
        <taxon>Enterobacterales</taxon>
        <taxon>Enterobacteriaceae</taxon>
        <taxon>Citrobacter</taxon>
    </lineage>
</organism>